<protein>
    <recommendedName>
        <fullName evidence="1">UPF0178 protein Lferr_2865</fullName>
    </recommendedName>
</protein>
<reference key="1">
    <citation type="submission" date="2008-08" db="EMBL/GenBank/DDBJ databases">
        <title>Complete sequence of Acidithiobacillus ferrooxidans ATCC 53993.</title>
        <authorList>
            <person name="Lucas S."/>
            <person name="Copeland A."/>
            <person name="Lapidus A."/>
            <person name="Glavina del Rio T."/>
            <person name="Dalin E."/>
            <person name="Tice H."/>
            <person name="Bruce D."/>
            <person name="Goodwin L."/>
            <person name="Pitluck S."/>
            <person name="Sims D."/>
            <person name="Brettin T."/>
            <person name="Detter J.C."/>
            <person name="Han C."/>
            <person name="Kuske C.R."/>
            <person name="Larimer F."/>
            <person name="Land M."/>
            <person name="Hauser L."/>
            <person name="Kyrpides N."/>
            <person name="Lykidis A."/>
            <person name="Borole A.P."/>
        </authorList>
    </citation>
    <scope>NUCLEOTIDE SEQUENCE [LARGE SCALE GENOMIC DNA]</scope>
    <source>
        <strain>ATCC 53993 / BNL-5-31</strain>
    </source>
</reference>
<comment type="similarity">
    <text evidence="1">Belongs to the UPF0178 family.</text>
</comment>
<organism>
    <name type="scientific">Acidithiobacillus ferrooxidans (strain ATCC 53993 / BNL-5-31)</name>
    <name type="common">Leptospirillum ferrooxidans (ATCC 53993)</name>
    <dbReference type="NCBI Taxonomy" id="380394"/>
    <lineage>
        <taxon>Bacteria</taxon>
        <taxon>Pseudomonadati</taxon>
        <taxon>Pseudomonadota</taxon>
        <taxon>Acidithiobacillia</taxon>
        <taxon>Acidithiobacillales</taxon>
        <taxon>Acidithiobacillaceae</taxon>
        <taxon>Acidithiobacillus</taxon>
    </lineage>
</organism>
<evidence type="ECO:0000255" key="1">
    <source>
        <dbReference type="HAMAP-Rule" id="MF_00489"/>
    </source>
</evidence>
<name>Y2865_ACIF5</name>
<accession>B5ERK4</accession>
<proteinExistence type="inferred from homology"/>
<gene>
    <name type="ordered locus">Lferr_2865</name>
</gene>
<sequence length="147" mass="16325">MHIWVDADACPNVIKDILYRASDRLKLPLTLVANQALRVHRSAYIRTVVVPRGFDVADEEIVRHIVAGDLVITADIPLAAAVLEKNSHALSPRGERYSPETIHERLRIRDMMEQLRDSGVRTGGPAALSQADRQAFANALDQLLVRA</sequence>
<feature type="chain" id="PRO_1000126170" description="UPF0178 protein Lferr_2865">
    <location>
        <begin position="1"/>
        <end position="147"/>
    </location>
</feature>
<dbReference type="EMBL" id="CP001132">
    <property type="protein sequence ID" value="ACH85050.1"/>
    <property type="molecule type" value="Genomic_DNA"/>
</dbReference>
<dbReference type="RefSeq" id="WP_012537685.1">
    <property type="nucleotide sequence ID" value="NC_011206.1"/>
</dbReference>
<dbReference type="KEGG" id="afe:Lferr_2865"/>
<dbReference type="eggNOG" id="COG1671">
    <property type="taxonomic scope" value="Bacteria"/>
</dbReference>
<dbReference type="HOGENOM" id="CLU_106619_2_1_6"/>
<dbReference type="CDD" id="cd18720">
    <property type="entry name" value="PIN_YqxD-like"/>
    <property type="match status" value="1"/>
</dbReference>
<dbReference type="HAMAP" id="MF_00489">
    <property type="entry name" value="UPF0178"/>
    <property type="match status" value="1"/>
</dbReference>
<dbReference type="InterPro" id="IPR003791">
    <property type="entry name" value="UPF0178"/>
</dbReference>
<dbReference type="NCBIfam" id="NF001095">
    <property type="entry name" value="PRK00124.1"/>
    <property type="match status" value="1"/>
</dbReference>
<dbReference type="PANTHER" id="PTHR35146">
    <property type="entry name" value="UPF0178 PROTEIN YAII"/>
    <property type="match status" value="1"/>
</dbReference>
<dbReference type="PANTHER" id="PTHR35146:SF1">
    <property type="entry name" value="UPF0178 PROTEIN YAII"/>
    <property type="match status" value="1"/>
</dbReference>
<dbReference type="Pfam" id="PF02639">
    <property type="entry name" value="DUF188"/>
    <property type="match status" value="1"/>
</dbReference>